<proteinExistence type="inferred from homology"/>
<evidence type="ECO:0000255" key="1">
    <source>
        <dbReference type="PROSITE-ProRule" id="PRU00977"/>
    </source>
</evidence>
<evidence type="ECO:0000305" key="2"/>
<reference key="1">
    <citation type="journal article" date="2000" name="Nature">
        <title>Complete genome sequence of Pseudomonas aeruginosa PAO1, an opportunistic pathogen.</title>
        <authorList>
            <person name="Stover C.K."/>
            <person name="Pham X.-Q.T."/>
            <person name="Erwin A.L."/>
            <person name="Mizoguchi S.D."/>
            <person name="Warrener P."/>
            <person name="Hickey M.J."/>
            <person name="Brinkman F.S.L."/>
            <person name="Hufnagle W.O."/>
            <person name="Kowalik D.J."/>
            <person name="Lagrou M."/>
            <person name="Garber R.L."/>
            <person name="Goltry L."/>
            <person name="Tolentino E."/>
            <person name="Westbrock-Wadman S."/>
            <person name="Yuan Y."/>
            <person name="Brody L.L."/>
            <person name="Coulter S.N."/>
            <person name="Folger K.R."/>
            <person name="Kas A."/>
            <person name="Larbig K."/>
            <person name="Lim R.M."/>
            <person name="Smith K.A."/>
            <person name="Spencer D.H."/>
            <person name="Wong G.K.-S."/>
            <person name="Wu Z."/>
            <person name="Paulsen I.T."/>
            <person name="Reizer J."/>
            <person name="Saier M.H. Jr."/>
            <person name="Hancock R.E.W."/>
            <person name="Lory S."/>
            <person name="Olson M.V."/>
        </authorList>
    </citation>
    <scope>NUCLEOTIDE SEQUENCE [LARGE SCALE GENOMIC DNA]</scope>
    <source>
        <strain>ATCC 15692 / DSM 22644 / CIP 104116 / JCM 14847 / LMG 12228 / 1C / PRS 101 / PAO1</strain>
    </source>
</reference>
<comment type="similarity">
    <text evidence="2">Belongs to the UPF0213 family.</text>
</comment>
<feature type="chain" id="PRO_0000161375" description="UPF0213 protein PA3854">
    <location>
        <begin position="1"/>
        <end position="104"/>
    </location>
</feature>
<feature type="domain" description="GIY-YIG" evidence="1">
    <location>
        <begin position="13"/>
        <end position="88"/>
    </location>
</feature>
<name>Y3854_PSEAE</name>
<organism>
    <name type="scientific">Pseudomonas aeruginosa (strain ATCC 15692 / DSM 22644 / CIP 104116 / JCM 14847 / LMG 12228 / 1C / PRS 101 / PAO1)</name>
    <dbReference type="NCBI Taxonomy" id="208964"/>
    <lineage>
        <taxon>Bacteria</taxon>
        <taxon>Pseudomonadati</taxon>
        <taxon>Pseudomonadota</taxon>
        <taxon>Gammaproteobacteria</taxon>
        <taxon>Pseudomonadales</taxon>
        <taxon>Pseudomonadaceae</taxon>
        <taxon>Pseudomonas</taxon>
    </lineage>
</organism>
<gene>
    <name type="ordered locus">PA3854</name>
</gene>
<accession>Q9HXF2</accession>
<protein>
    <recommendedName>
        <fullName>UPF0213 protein PA3854</fullName>
    </recommendedName>
</protein>
<sequence length="104" mass="11236">MSEATAATAAIGKCWSVYLVRAENGALYCGISDDPLRRFDTHCSGKGARFFHSSPARALVYVEACASKGDALRRERAIKALSKRAKERLLVGVPVLREVGEPAI</sequence>
<keyword id="KW-1185">Reference proteome</keyword>
<dbReference type="EMBL" id="AE004091">
    <property type="protein sequence ID" value="AAG07241.1"/>
    <property type="molecule type" value="Genomic_DNA"/>
</dbReference>
<dbReference type="PIR" id="A83165">
    <property type="entry name" value="A83165"/>
</dbReference>
<dbReference type="RefSeq" id="NP_252543.1">
    <property type="nucleotide sequence ID" value="NC_002516.2"/>
</dbReference>
<dbReference type="RefSeq" id="WP_003119275.1">
    <property type="nucleotide sequence ID" value="NZ_QZGE01000001.1"/>
</dbReference>
<dbReference type="SMR" id="Q9HXF2"/>
<dbReference type="FunCoup" id="Q9HXF2">
    <property type="interactions" value="138"/>
</dbReference>
<dbReference type="STRING" id="208964.PA3854"/>
<dbReference type="PaxDb" id="208964-PA3854"/>
<dbReference type="GeneID" id="879807"/>
<dbReference type="KEGG" id="pae:PA3854"/>
<dbReference type="PATRIC" id="fig|208964.12.peg.4035"/>
<dbReference type="PseudoCAP" id="PA3854"/>
<dbReference type="HOGENOM" id="CLU_135650_0_2_6"/>
<dbReference type="InParanoid" id="Q9HXF2"/>
<dbReference type="OrthoDB" id="9797095at2"/>
<dbReference type="PhylomeDB" id="Q9HXF2"/>
<dbReference type="BioCyc" id="PAER208964:G1FZ6-3925-MONOMER"/>
<dbReference type="Proteomes" id="UP000002438">
    <property type="component" value="Chromosome"/>
</dbReference>
<dbReference type="CDD" id="cd10456">
    <property type="entry name" value="GIY-YIG_UPF0213"/>
    <property type="match status" value="1"/>
</dbReference>
<dbReference type="Gene3D" id="3.40.1440.10">
    <property type="entry name" value="GIY-YIG endonuclease"/>
    <property type="match status" value="1"/>
</dbReference>
<dbReference type="InterPro" id="IPR000305">
    <property type="entry name" value="GIY-YIG_endonuc"/>
</dbReference>
<dbReference type="InterPro" id="IPR035901">
    <property type="entry name" value="GIY-YIG_endonuc_sf"/>
</dbReference>
<dbReference type="InterPro" id="IPR050190">
    <property type="entry name" value="UPF0213_domain"/>
</dbReference>
<dbReference type="PANTHER" id="PTHR34477">
    <property type="entry name" value="UPF0213 PROTEIN YHBQ"/>
    <property type="match status" value="1"/>
</dbReference>
<dbReference type="PANTHER" id="PTHR34477:SF1">
    <property type="entry name" value="UPF0213 PROTEIN YHBQ"/>
    <property type="match status" value="1"/>
</dbReference>
<dbReference type="Pfam" id="PF01541">
    <property type="entry name" value="GIY-YIG"/>
    <property type="match status" value="1"/>
</dbReference>
<dbReference type="SUPFAM" id="SSF82771">
    <property type="entry name" value="GIY-YIG endonuclease"/>
    <property type="match status" value="1"/>
</dbReference>
<dbReference type="PROSITE" id="PS50164">
    <property type="entry name" value="GIY_YIG"/>
    <property type="match status" value="1"/>
</dbReference>